<sequence length="411" mass="47288">MGKNDFLTPKAIANRIKAKGLQKLRWYCQMCQKQCRDENGFKCHCMSESHQRQMQVFGQNPTRVVDGYSEEFEQTFLDLMRRSHRFSRIAATVVYNEYINDRHHVHMNSTEWATLTEFIKHLGKTGKCKVEETPKGWFITYIDRDSETLFKERLKNKRVKSDLAEEEKQEREIQRQIERAAEKLNGGGGEGETSGNDEVVDDGDDERKKDEDLRLKSGVKVGFALGGGVKQVATGKERGESSKLLFGDEENDKVERGEKRKRSGDSGRSEKERRSALDELMKEEEKKKERMNRKDYWLFEGIIVKVMSKALAEKGYYKQKGVVKKVIDNYVGEIKMLDSKHVLRVDQKELETVLPQIGGMVKIVNGAYRGSNARLLGVDTEKFCAKVQIEKGVYDGRVIKSIEYEDICKLA</sequence>
<proteinExistence type="evidence at protein level"/>
<keyword id="KW-0175">Coiled coil</keyword>
<keyword id="KW-0479">Metal-binding</keyword>
<keyword id="KW-0539">Nucleus</keyword>
<keyword id="KW-1185">Reference proteome</keyword>
<keyword id="KW-0346">Stress response</keyword>
<keyword id="KW-0862">Zinc</keyword>
<keyword id="KW-0863">Zinc-finger</keyword>
<evidence type="ECO:0000250" key="1">
    <source>
        <dbReference type="UniProtKB" id="O60870"/>
    </source>
</evidence>
<evidence type="ECO:0000255" key="2"/>
<evidence type="ECO:0000256" key="3">
    <source>
        <dbReference type="SAM" id="MobiDB-lite"/>
    </source>
</evidence>
<evidence type="ECO:0000269" key="4">
    <source>
    </source>
</evidence>
<evidence type="ECO:0000269" key="5">
    <source>
    </source>
</evidence>
<evidence type="ECO:0000303" key="6">
    <source>
    </source>
</evidence>
<evidence type="ECO:0000305" key="7"/>
<evidence type="ECO:0000305" key="8">
    <source>
    </source>
</evidence>
<evidence type="ECO:0000312" key="9">
    <source>
        <dbReference type="Araport" id="AT1G55460"/>
    </source>
</evidence>
<evidence type="ECO:0000312" key="10">
    <source>
        <dbReference type="EMBL" id="AAD10649.1"/>
    </source>
</evidence>
<comment type="function">
    <text evidence="4 5">Promotes the copper deficiency response by direct interaction with SPL7. Acts with SPL7 in a common pathway to promote copper-responsive genes and alleviate oxidative stress during copper-limiting periods. May promote SPL7 function when copper is limiting (PubMed:24335506). Participates in the control of general plant growth and development, and in the response to counteract the negative effects of UV radiation (PubMed:24713636).</text>
</comment>
<comment type="subunit">
    <text evidence="4">Interacts with SPL7.</text>
</comment>
<comment type="subcellular location">
    <subcellularLocation>
        <location evidence="4">Nucleus speckle</location>
    </subcellularLocation>
    <text evidence="4">Nuclear localization with a speckled distribution pattern.</text>
</comment>
<comment type="tissue specificity">
    <text evidence="4">Expressed in root vasculature, lateral roots, cotyledons, rosette leaves, cauline leaves, stems, sepals, style of pistils, mature pollen grains and siliques.</text>
</comment>
<comment type="miscellaneous">
    <text evidence="5">Plants silencing KIN17 show aberrant growth and reduced fertility.</text>
</comment>
<comment type="similarity">
    <text evidence="7">Belongs to the KIN17 family.</text>
</comment>
<name>KIN17_ARATH</name>
<dbReference type="EMBL" id="AC005223">
    <property type="protein sequence ID" value="AAD10649.1"/>
    <property type="molecule type" value="Genomic_DNA"/>
</dbReference>
<dbReference type="EMBL" id="CP002684">
    <property type="protein sequence ID" value="AEE33248.1"/>
    <property type="molecule type" value="Genomic_DNA"/>
</dbReference>
<dbReference type="EMBL" id="AF360132">
    <property type="protein sequence ID" value="AAK25842.1"/>
    <property type="molecule type" value="mRNA"/>
</dbReference>
<dbReference type="EMBL" id="AY051011">
    <property type="protein sequence ID" value="AAK93688.1"/>
    <property type="molecule type" value="mRNA"/>
</dbReference>
<dbReference type="PIR" id="H96596">
    <property type="entry name" value="H96596"/>
</dbReference>
<dbReference type="RefSeq" id="NP_564690.1">
    <property type="nucleotide sequence ID" value="NM_104422.2"/>
</dbReference>
<dbReference type="SMR" id="Q9ZVU5"/>
<dbReference type="FunCoup" id="Q9ZVU5">
    <property type="interactions" value="4517"/>
</dbReference>
<dbReference type="IntAct" id="Q9ZVU5">
    <property type="interactions" value="1"/>
</dbReference>
<dbReference type="STRING" id="3702.Q9ZVU5"/>
<dbReference type="iPTMnet" id="Q9ZVU5"/>
<dbReference type="PaxDb" id="3702-AT1G55460.1"/>
<dbReference type="ProteomicsDB" id="238214"/>
<dbReference type="EnsemblPlants" id="AT1G55460.1">
    <property type="protein sequence ID" value="AT1G55460.1"/>
    <property type="gene ID" value="AT1G55460"/>
</dbReference>
<dbReference type="GeneID" id="841993"/>
<dbReference type="Gramene" id="AT1G55460.1">
    <property type="protein sequence ID" value="AT1G55460.1"/>
    <property type="gene ID" value="AT1G55460"/>
</dbReference>
<dbReference type="KEGG" id="ath:AT1G55460"/>
<dbReference type="Araport" id="AT1G55460"/>
<dbReference type="TAIR" id="AT1G55460">
    <property type="gene designation" value="KIN17"/>
</dbReference>
<dbReference type="eggNOG" id="KOG2837">
    <property type="taxonomic scope" value="Eukaryota"/>
</dbReference>
<dbReference type="HOGENOM" id="CLU_030065_1_0_1"/>
<dbReference type="InParanoid" id="Q9ZVU5"/>
<dbReference type="OMA" id="RMTDFIE"/>
<dbReference type="OrthoDB" id="10266249at2759"/>
<dbReference type="PhylomeDB" id="Q9ZVU5"/>
<dbReference type="PRO" id="PR:Q9ZVU5"/>
<dbReference type="Proteomes" id="UP000006548">
    <property type="component" value="Chromosome 1"/>
</dbReference>
<dbReference type="ExpressionAtlas" id="Q9ZVU5">
    <property type="expression patterns" value="baseline and differential"/>
</dbReference>
<dbReference type="GO" id="GO:0016607">
    <property type="term" value="C:nuclear speck"/>
    <property type="evidence" value="ECO:0000314"/>
    <property type="project" value="UniProtKB"/>
</dbReference>
<dbReference type="GO" id="GO:0008270">
    <property type="term" value="F:zinc ion binding"/>
    <property type="evidence" value="ECO:0007669"/>
    <property type="project" value="UniProtKB-KW"/>
</dbReference>
<dbReference type="GO" id="GO:0035874">
    <property type="term" value="P:cellular response to copper ion starvation"/>
    <property type="evidence" value="ECO:0000315"/>
    <property type="project" value="UniProtKB"/>
</dbReference>
<dbReference type="GO" id="GO:0048638">
    <property type="term" value="P:regulation of developmental growth"/>
    <property type="evidence" value="ECO:0000315"/>
    <property type="project" value="UniProtKB"/>
</dbReference>
<dbReference type="CDD" id="cd13155">
    <property type="entry name" value="KOW_KIN17"/>
    <property type="match status" value="1"/>
</dbReference>
<dbReference type="FunFam" id="1.10.10.2030:FF:000001">
    <property type="entry name" value="DNA/RNA-binding protein KIN17, putative"/>
    <property type="match status" value="1"/>
</dbReference>
<dbReference type="FunFam" id="2.30.30.30:FF:000021">
    <property type="entry name" value="DNA/RNA-binding protein KIN17, putative"/>
    <property type="match status" value="1"/>
</dbReference>
<dbReference type="FunFam" id="2.30.30.140:FF:000056">
    <property type="entry name" value="DNA/RNA-binding protein kin17-like"/>
    <property type="match status" value="1"/>
</dbReference>
<dbReference type="Gene3D" id="2.30.30.140">
    <property type="match status" value="1"/>
</dbReference>
<dbReference type="Gene3D" id="2.30.30.30">
    <property type="match status" value="1"/>
</dbReference>
<dbReference type="Gene3D" id="1.10.10.2030">
    <property type="entry name" value="DNA/RNA-binding protein Kin17, conserved domain"/>
    <property type="match status" value="1"/>
</dbReference>
<dbReference type="InterPro" id="IPR056767">
    <property type="entry name" value="C2H2-Znf_KIN17"/>
</dbReference>
<dbReference type="InterPro" id="IPR019447">
    <property type="entry name" value="DNA/RNA-bd_Kin17_WH-like_dom"/>
</dbReference>
<dbReference type="InterPro" id="IPR037321">
    <property type="entry name" value="KIN17-like"/>
</dbReference>
<dbReference type="InterPro" id="IPR038254">
    <property type="entry name" value="KIN17_WH-like_sf"/>
</dbReference>
<dbReference type="InterPro" id="IPR041330">
    <property type="entry name" value="KN17_SH3"/>
</dbReference>
<dbReference type="InterPro" id="IPR041995">
    <property type="entry name" value="KOW_KIN17"/>
</dbReference>
<dbReference type="InterPro" id="IPR014722">
    <property type="entry name" value="Rib_uL2_dom2"/>
</dbReference>
<dbReference type="InterPro" id="IPR036236">
    <property type="entry name" value="Znf_C2H2_sf"/>
</dbReference>
<dbReference type="PANTHER" id="PTHR12805:SF0">
    <property type="entry name" value="DNA_RNA-BINDING PROTEIN KIN17"/>
    <property type="match status" value="1"/>
</dbReference>
<dbReference type="PANTHER" id="PTHR12805">
    <property type="entry name" value="KIN17 KIN, ANTIGENIC DETERMINANT OF RECA PROTEIN HOMOLOG"/>
    <property type="match status" value="1"/>
</dbReference>
<dbReference type="Pfam" id="PF25095">
    <property type="entry name" value="C2H2-zf_KIN17"/>
    <property type="match status" value="1"/>
</dbReference>
<dbReference type="Pfam" id="PF18131">
    <property type="entry name" value="KN17_SH3"/>
    <property type="match status" value="1"/>
</dbReference>
<dbReference type="Pfam" id="PF25092">
    <property type="entry name" value="SH3_KIN17_C"/>
    <property type="match status" value="1"/>
</dbReference>
<dbReference type="Pfam" id="PF10357">
    <property type="entry name" value="WH_KIN17"/>
    <property type="match status" value="1"/>
</dbReference>
<dbReference type="SMART" id="SM01253">
    <property type="entry name" value="Kin17_mid"/>
    <property type="match status" value="1"/>
</dbReference>
<dbReference type="SUPFAM" id="SSF57667">
    <property type="entry name" value="beta-beta-alpha zinc fingers"/>
    <property type="match status" value="1"/>
</dbReference>
<dbReference type="PROSITE" id="PS00028">
    <property type="entry name" value="ZINC_FINGER_C2H2_1"/>
    <property type="match status" value="1"/>
</dbReference>
<accession>Q9ZVU5</accession>
<reference key="1">
    <citation type="journal article" date="2000" name="Nature">
        <title>Sequence and analysis of chromosome 1 of the plant Arabidopsis thaliana.</title>
        <authorList>
            <person name="Theologis A."/>
            <person name="Ecker J.R."/>
            <person name="Palm C.J."/>
            <person name="Federspiel N.A."/>
            <person name="Kaul S."/>
            <person name="White O."/>
            <person name="Alonso J."/>
            <person name="Altafi H."/>
            <person name="Araujo R."/>
            <person name="Bowman C.L."/>
            <person name="Brooks S.Y."/>
            <person name="Buehler E."/>
            <person name="Chan A."/>
            <person name="Chao Q."/>
            <person name="Chen H."/>
            <person name="Cheuk R.F."/>
            <person name="Chin C.W."/>
            <person name="Chung M.K."/>
            <person name="Conn L."/>
            <person name="Conway A.B."/>
            <person name="Conway A.R."/>
            <person name="Creasy T.H."/>
            <person name="Dewar K."/>
            <person name="Dunn P."/>
            <person name="Etgu P."/>
            <person name="Feldblyum T.V."/>
            <person name="Feng J.-D."/>
            <person name="Fong B."/>
            <person name="Fujii C.Y."/>
            <person name="Gill J.E."/>
            <person name="Goldsmith A.D."/>
            <person name="Haas B."/>
            <person name="Hansen N.F."/>
            <person name="Hughes B."/>
            <person name="Huizar L."/>
            <person name="Hunter J.L."/>
            <person name="Jenkins J."/>
            <person name="Johnson-Hopson C."/>
            <person name="Khan S."/>
            <person name="Khaykin E."/>
            <person name="Kim C.J."/>
            <person name="Koo H.L."/>
            <person name="Kremenetskaia I."/>
            <person name="Kurtz D.B."/>
            <person name="Kwan A."/>
            <person name="Lam B."/>
            <person name="Langin-Hooper S."/>
            <person name="Lee A."/>
            <person name="Lee J.M."/>
            <person name="Lenz C.A."/>
            <person name="Li J.H."/>
            <person name="Li Y.-P."/>
            <person name="Lin X."/>
            <person name="Liu S.X."/>
            <person name="Liu Z.A."/>
            <person name="Luros J.S."/>
            <person name="Maiti R."/>
            <person name="Marziali A."/>
            <person name="Militscher J."/>
            <person name="Miranda M."/>
            <person name="Nguyen M."/>
            <person name="Nierman W.C."/>
            <person name="Osborne B.I."/>
            <person name="Pai G."/>
            <person name="Peterson J."/>
            <person name="Pham P.K."/>
            <person name="Rizzo M."/>
            <person name="Rooney T."/>
            <person name="Rowley D."/>
            <person name="Sakano H."/>
            <person name="Salzberg S.L."/>
            <person name="Schwartz J.R."/>
            <person name="Shinn P."/>
            <person name="Southwick A.M."/>
            <person name="Sun H."/>
            <person name="Tallon L.J."/>
            <person name="Tambunga G."/>
            <person name="Toriumi M.J."/>
            <person name="Town C.D."/>
            <person name="Utterback T."/>
            <person name="Van Aken S."/>
            <person name="Vaysberg M."/>
            <person name="Vysotskaia V.S."/>
            <person name="Walker M."/>
            <person name="Wu D."/>
            <person name="Yu G."/>
            <person name="Fraser C.M."/>
            <person name="Venter J.C."/>
            <person name="Davis R.W."/>
        </authorList>
    </citation>
    <scope>NUCLEOTIDE SEQUENCE [LARGE SCALE GENOMIC DNA]</scope>
    <source>
        <strain>cv. Columbia</strain>
    </source>
</reference>
<reference key="2">
    <citation type="journal article" date="2017" name="Plant J.">
        <title>Araport11: a complete reannotation of the Arabidopsis thaliana reference genome.</title>
        <authorList>
            <person name="Cheng C.Y."/>
            <person name="Krishnakumar V."/>
            <person name="Chan A.P."/>
            <person name="Thibaud-Nissen F."/>
            <person name="Schobel S."/>
            <person name="Town C.D."/>
        </authorList>
    </citation>
    <scope>GENOME REANNOTATION</scope>
    <source>
        <strain>cv. Columbia</strain>
    </source>
</reference>
<reference key="3">
    <citation type="journal article" date="2003" name="Science">
        <title>Empirical analysis of transcriptional activity in the Arabidopsis genome.</title>
        <authorList>
            <person name="Yamada K."/>
            <person name="Lim J."/>
            <person name="Dale J.M."/>
            <person name="Chen H."/>
            <person name="Shinn P."/>
            <person name="Palm C.J."/>
            <person name="Southwick A.M."/>
            <person name="Wu H.C."/>
            <person name="Kim C.J."/>
            <person name="Nguyen M."/>
            <person name="Pham P.K."/>
            <person name="Cheuk R.F."/>
            <person name="Karlin-Newmann G."/>
            <person name="Liu S.X."/>
            <person name="Lam B."/>
            <person name="Sakano H."/>
            <person name="Wu T."/>
            <person name="Yu G."/>
            <person name="Miranda M."/>
            <person name="Quach H.L."/>
            <person name="Tripp M."/>
            <person name="Chang C.H."/>
            <person name="Lee J.M."/>
            <person name="Toriumi M.J."/>
            <person name="Chan M.M."/>
            <person name="Tang C.C."/>
            <person name="Onodera C.S."/>
            <person name="Deng J.M."/>
            <person name="Akiyama K."/>
            <person name="Ansari Y."/>
            <person name="Arakawa T."/>
            <person name="Banh J."/>
            <person name="Banno F."/>
            <person name="Bowser L."/>
            <person name="Brooks S.Y."/>
            <person name="Carninci P."/>
            <person name="Chao Q."/>
            <person name="Choy N."/>
            <person name="Enju A."/>
            <person name="Goldsmith A.D."/>
            <person name="Gurjal M."/>
            <person name="Hansen N.F."/>
            <person name="Hayashizaki Y."/>
            <person name="Johnson-Hopson C."/>
            <person name="Hsuan V.W."/>
            <person name="Iida K."/>
            <person name="Karnes M."/>
            <person name="Khan S."/>
            <person name="Koesema E."/>
            <person name="Ishida J."/>
            <person name="Jiang P.X."/>
            <person name="Jones T."/>
            <person name="Kawai J."/>
            <person name="Kamiya A."/>
            <person name="Meyers C."/>
            <person name="Nakajima M."/>
            <person name="Narusaka M."/>
            <person name="Seki M."/>
            <person name="Sakurai T."/>
            <person name="Satou M."/>
            <person name="Tamse R."/>
            <person name="Vaysberg M."/>
            <person name="Wallender E.K."/>
            <person name="Wong C."/>
            <person name="Yamamura Y."/>
            <person name="Yuan S."/>
            <person name="Shinozaki K."/>
            <person name="Davis R.W."/>
            <person name="Theologis A."/>
            <person name="Ecker J.R."/>
        </authorList>
    </citation>
    <scope>NUCLEOTIDE SEQUENCE [LARGE SCALE MRNA]</scope>
    <source>
        <strain>cv. Columbia</strain>
    </source>
</reference>
<reference key="4">
    <citation type="journal article" date="2014" name="Plant Physiol.">
        <title>A conserved KIN17 curved DNA-binding domain protein assembles with SQUAMOSA PROMOTER-BINDING PROTEIN-LIKE7 to adapt Arabidopsis growth and development to limiting copper availability.</title>
        <authorList>
            <person name="Garcia-Molina A."/>
            <person name="Xing S."/>
            <person name="Huijser P."/>
        </authorList>
    </citation>
    <scope>FUNCTION</scope>
    <scope>INTERACTION WITH SPL7</scope>
    <scope>SUBCELLULAR LOCATION</scope>
    <scope>TISSUE SPECIFICITY</scope>
</reference>
<reference key="5">
    <citation type="journal article" date="2014" name="Plant Signal. Behav.">
        <title>The Arabidopsis KIN17 and its homolog KLP mediate different aspects of plant growth and development.</title>
        <authorList>
            <person name="Garcia-Molina A."/>
            <person name="Xing S."/>
            <person name="Huijser P."/>
        </authorList>
    </citation>
    <scope>FUNCTION</scope>
    <scope>SUBCELLULAR LOCATION</scope>
</reference>
<protein>
    <recommendedName>
        <fullName evidence="7">KIN17-like protein</fullName>
    </recommendedName>
</protein>
<organism>
    <name type="scientific">Arabidopsis thaliana</name>
    <name type="common">Mouse-ear cress</name>
    <dbReference type="NCBI Taxonomy" id="3702"/>
    <lineage>
        <taxon>Eukaryota</taxon>
        <taxon>Viridiplantae</taxon>
        <taxon>Streptophyta</taxon>
        <taxon>Embryophyta</taxon>
        <taxon>Tracheophyta</taxon>
        <taxon>Spermatophyta</taxon>
        <taxon>Magnoliopsida</taxon>
        <taxon>eudicotyledons</taxon>
        <taxon>Gunneridae</taxon>
        <taxon>Pentapetalae</taxon>
        <taxon>rosids</taxon>
        <taxon>malvids</taxon>
        <taxon>Brassicales</taxon>
        <taxon>Brassicaceae</taxon>
        <taxon>Camelineae</taxon>
        <taxon>Arabidopsis</taxon>
    </lineage>
</organism>
<gene>
    <name evidence="6" type="primary">KIN17</name>
    <name evidence="9" type="ordered locus">At1g55460</name>
    <name evidence="10" type="ORF">T5A14.13</name>
</gene>
<feature type="chain" id="PRO_0000438804" description="KIN17-like protein">
    <location>
        <begin position="1"/>
        <end position="411"/>
    </location>
</feature>
<feature type="zinc finger region" description="C2H2-type" evidence="2">
    <location>
        <begin position="28"/>
        <end position="50"/>
    </location>
</feature>
<feature type="region of interest" description="Winged helix-turn-helix (wHTH)" evidence="1">
    <location>
        <begin position="51"/>
        <end position="160"/>
    </location>
</feature>
<feature type="region of interest" description="Disordered" evidence="3">
    <location>
        <begin position="182"/>
        <end position="211"/>
    </location>
</feature>
<feature type="region of interest" description="Disordered" evidence="3">
    <location>
        <begin position="232"/>
        <end position="286"/>
    </location>
</feature>
<feature type="region of interest" description="C-terminal subdomain A" evidence="1">
    <location>
        <begin position="301"/>
        <end position="352"/>
    </location>
</feature>
<feature type="region of interest" description="C-terminal subdomain B" evidence="1">
    <location>
        <begin position="358"/>
        <end position="409"/>
    </location>
</feature>
<feature type="coiled-coil region" evidence="2">
    <location>
        <begin position="147"/>
        <end position="183"/>
    </location>
</feature>
<feature type="coiled-coil region" evidence="2">
    <location>
        <begin position="265"/>
        <end position="294"/>
    </location>
</feature>
<feature type="short sequence motif" description="Nuclear localization signal (NLS)" evidence="8">
    <location>
        <begin position="259"/>
        <end position="262"/>
    </location>
</feature>
<feature type="compositionally biased region" description="Basic and acidic residues" evidence="3">
    <location>
        <begin position="253"/>
        <end position="286"/>
    </location>
</feature>